<dbReference type="EMBL" id="AY653733">
    <property type="protein sequence ID" value="AAV50281.1"/>
    <property type="molecule type" value="Genomic_DNA"/>
</dbReference>
<dbReference type="KEGG" id="vg:9924575"/>
<dbReference type="Proteomes" id="UP000001134">
    <property type="component" value="Genome"/>
</dbReference>
<sequence>MESKIIKNGCIIIKYERKKRYCKYCEELLPSYLETWKTHHPKCWYKDKRIFINVANSDGHCDELVFYDENKHDNIIKYSRKKITTKHELEEYPIGSLISYTNKKNEFRKAGYVLKYSDNYFIYVTPDFQTKYRVKYKNVLEMWVKKVDSPLKDLIWQAETIQEKTNFPIFIGNKVIYYAKNNSDRDKYMDTTKYKKLVKWYDHFGNNQTLLKFLNTVK</sequence>
<protein>
    <recommendedName>
        <fullName>Uncharacterized protein L6</fullName>
    </recommendedName>
</protein>
<proteinExistence type="inferred from homology"/>
<evidence type="ECO:0000305" key="1"/>
<keyword id="KW-1185">Reference proteome</keyword>
<feature type="chain" id="PRO_0000071174" description="Uncharacterized protein L6">
    <location>
        <begin position="1"/>
        <end position="218"/>
    </location>
</feature>
<reference key="1">
    <citation type="journal article" date="2004" name="Science">
        <title>The 1.2-megabase genome sequence of Mimivirus.</title>
        <authorList>
            <person name="Raoult D."/>
            <person name="Audic S."/>
            <person name="Robert C."/>
            <person name="Abergel C."/>
            <person name="Renesto P."/>
            <person name="Ogata H."/>
            <person name="La Scola B."/>
            <person name="Susan M."/>
            <person name="Claverie J.-M."/>
        </authorList>
    </citation>
    <scope>NUCLEOTIDE SEQUENCE [LARGE SCALE GENOMIC DNA]</scope>
    <source>
        <strain>Rowbotham-Bradford</strain>
    </source>
</reference>
<name>YL006_MIMIV</name>
<organism>
    <name type="scientific">Acanthamoeba polyphaga mimivirus</name>
    <name type="common">APMV</name>
    <dbReference type="NCBI Taxonomy" id="212035"/>
    <lineage>
        <taxon>Viruses</taxon>
        <taxon>Varidnaviria</taxon>
        <taxon>Bamfordvirae</taxon>
        <taxon>Nucleocytoviricota</taxon>
        <taxon>Megaviricetes</taxon>
        <taxon>Imitervirales</taxon>
        <taxon>Mimiviridae</taxon>
        <taxon>Megamimivirinae</taxon>
        <taxon>Mimivirus</taxon>
        <taxon>Mimivirus bradfordmassiliense</taxon>
    </lineage>
</organism>
<accession>Q5UP81</accession>
<organismHost>
    <name type="scientific">Acanthamoeba polyphaga</name>
    <name type="common">Amoeba</name>
    <dbReference type="NCBI Taxonomy" id="5757"/>
</organismHost>
<gene>
    <name type="ordered locus">MIMI_L6</name>
</gene>
<comment type="similarity">
    <text evidence="1">Belongs to the mimivirus L6/L7/L57 family.</text>
</comment>